<name>ASIC5_HUMAN</name>
<sequence length="505" mass="57464">MEQTEKSKVYAENGLLEKIKLCLSKKPLPSPTERKKFDHDFAISTSFHGIHNIVQNRSKIRRVLWLVVVLGSVSLVTWQIYIRLLNYFTWPTTTSIEVQYVEKMEFPAVTFCNLNRFQTDAVAKFGVIFFLWHIVSKVLHLQEITANSTGSREATDFAASHQNFSIVEFIRNKGFYLNNSTLLDCEFFGKPCSPKDFAHVFTEYGNCFTFNHGETLQAKRKVSVSGRGLSLLFNVNQEAFTDNPALGFVDAGIIFVIHSPKKVPQFDGLGLLSPVGMHARVTIRQVKTVHQEYPWGECNPNIKLQNFSSYSTSGCLKECKAQHIKKQCGCVPFLLPGYGIECDLQKYFSCVSPVLDHIEFKDLCTVGTHNSSCPVSCEEIEYPATISYSSFPSQKALKYLSKKLNQSRKYIRENLVKIEINYSDLNYKITQQQKAVSVSELLADLGGQLGLFCGASLITIIEIIEYLFTNFYWICIFFLLKISEMTQWTPPPQNHLGNKNRIEEC</sequence>
<proteinExistence type="evidence at protein level"/>
<accession>Q9NY37</accession>
<protein>
    <recommendedName>
        <fullName evidence="8">Bile acid-sensitive ion channel</fullName>
        <shortName evidence="8">BASIC</shortName>
    </recommendedName>
    <alternativeName>
        <fullName evidence="12">Acid-sensing ion channel subunit family member 5</fullName>
    </alternativeName>
    <alternativeName>
        <fullName evidence="12">Amiloride-sensitive cation channel 5, intestinal</fullName>
    </alternativeName>
    <alternativeName>
        <fullName evidence="7">Human intestine Na(+) channel</fullName>
        <shortName evidence="7">HINaC</shortName>
    </alternativeName>
</protein>
<feature type="chain" id="PRO_0000335597" description="Bile acid-sensitive ion channel">
    <location>
        <begin position="1"/>
        <end position="505"/>
    </location>
</feature>
<feature type="topological domain" description="Cytoplasmic" evidence="1">
    <location>
        <begin position="1"/>
        <end position="61"/>
    </location>
</feature>
<feature type="transmembrane region" description="Helical" evidence="4">
    <location>
        <begin position="62"/>
        <end position="82"/>
    </location>
</feature>
<feature type="topological domain" description="Extracellular" evidence="1">
    <location>
        <begin position="83"/>
        <end position="459"/>
    </location>
</feature>
<feature type="transmembrane region" description="Helical" evidence="4">
    <location>
        <begin position="460"/>
        <end position="480"/>
    </location>
</feature>
<feature type="topological domain" description="Cytoplasmic" evidence="1">
    <location>
        <begin position="481"/>
        <end position="505"/>
    </location>
</feature>
<feature type="region of interest" description="Binds the plasma membrane and stabilizes the channel in the closed state" evidence="2">
    <location>
        <begin position="1"/>
        <end position="30"/>
    </location>
</feature>
<feature type="short sequence motif" description="GAS motif; ion selectivity filter" evidence="1">
    <location>
        <begin position="454"/>
        <end position="456"/>
    </location>
</feature>
<feature type="glycosylation site" description="N-linked (GlcNAc...) asparagine" evidence="4">
    <location>
        <position position="147"/>
    </location>
</feature>
<feature type="glycosylation site" description="N-linked (GlcNAc...) asparagine" evidence="4">
    <location>
        <position position="163"/>
    </location>
</feature>
<feature type="glycosylation site" description="N-linked (GlcNAc...) asparagine" evidence="4">
    <location>
        <position position="178"/>
    </location>
</feature>
<feature type="glycosylation site" description="N-linked (GlcNAc...) asparagine" evidence="4">
    <location>
        <position position="179"/>
    </location>
</feature>
<feature type="glycosylation site" description="N-linked (GlcNAc...) asparagine" evidence="4">
    <location>
        <position position="306"/>
    </location>
</feature>
<feature type="glycosylation site" description="N-linked (GlcNAc...) asparagine" evidence="4">
    <location>
        <position position="370"/>
    </location>
</feature>
<feature type="glycosylation site" description="N-linked (GlcNAc...) asparagine" evidence="4">
    <location>
        <position position="405"/>
    </location>
</feature>
<feature type="glycosylation site" description="N-linked (GlcNAc...) asparagine" evidence="4">
    <location>
        <position position="421"/>
    </location>
</feature>
<feature type="disulfide bond" evidence="1">
    <location>
        <begin position="112"/>
        <end position="207"/>
    </location>
</feature>
<feature type="disulfide bond" evidence="1">
    <location>
        <begin position="185"/>
        <end position="192"/>
    </location>
</feature>
<feature type="disulfide bond" evidence="1">
    <location>
        <begin position="298"/>
        <end position="377"/>
    </location>
</feature>
<feature type="disulfide bond" evidence="1">
    <location>
        <begin position="315"/>
        <end position="373"/>
    </location>
</feature>
<feature type="disulfide bond" evidence="1">
    <location>
        <begin position="328"/>
        <end position="350"/>
    </location>
</feature>
<feature type="disulfide bond" evidence="1">
    <location>
        <begin position="330"/>
        <end position="342"/>
    </location>
</feature>
<feature type="mutagenesis site" description="Slightly activates the channel." evidence="5">
    <original>A</original>
    <variation>C</variation>
    <location>
        <position position="443"/>
    </location>
</feature>
<feature type="mutagenesis site" description="Activates the channel." evidence="5">
    <original>A</original>
    <variation>F</variation>
    <variation>T</variation>
    <location>
        <position position="443"/>
    </location>
</feature>
<organism>
    <name type="scientific">Homo sapiens</name>
    <name type="common">Human</name>
    <dbReference type="NCBI Taxonomy" id="9606"/>
    <lineage>
        <taxon>Eukaryota</taxon>
        <taxon>Metazoa</taxon>
        <taxon>Chordata</taxon>
        <taxon>Craniata</taxon>
        <taxon>Vertebrata</taxon>
        <taxon>Euteleostomi</taxon>
        <taxon>Mammalia</taxon>
        <taxon>Eutheria</taxon>
        <taxon>Euarchontoglires</taxon>
        <taxon>Primates</taxon>
        <taxon>Haplorrhini</taxon>
        <taxon>Catarrhini</taxon>
        <taxon>Hominidae</taxon>
        <taxon>Homo</taxon>
    </lineage>
</organism>
<keyword id="KW-1003">Cell membrane</keyword>
<keyword id="KW-1015">Disulfide bond</keyword>
<keyword id="KW-0325">Glycoprotein</keyword>
<keyword id="KW-0407">Ion channel</keyword>
<keyword id="KW-0406">Ion transport</keyword>
<keyword id="KW-0472">Membrane</keyword>
<keyword id="KW-1185">Reference proteome</keyword>
<keyword id="KW-0915">Sodium</keyword>
<keyword id="KW-0894">Sodium channel</keyword>
<keyword id="KW-0739">Sodium transport</keyword>
<keyword id="KW-0812">Transmembrane</keyword>
<keyword id="KW-1133">Transmembrane helix</keyword>
<keyword id="KW-0813">Transport</keyword>
<gene>
    <name evidence="12" type="primary">ASIC5</name>
    <name evidence="12" type="synonym">ACCN5</name>
</gene>
<evidence type="ECO:0000250" key="1">
    <source>
        <dbReference type="UniProtKB" id="P78348"/>
    </source>
</evidence>
<evidence type="ECO:0000250" key="2">
    <source>
        <dbReference type="UniProtKB" id="Q9R0W5"/>
    </source>
</evidence>
<evidence type="ECO:0000250" key="3">
    <source>
        <dbReference type="UniProtKB" id="Q9R0Y1"/>
    </source>
</evidence>
<evidence type="ECO:0000255" key="4"/>
<evidence type="ECO:0000269" key="5">
    <source>
    </source>
</evidence>
<evidence type="ECO:0000269" key="6">
    <source>
    </source>
</evidence>
<evidence type="ECO:0000303" key="7">
    <source>
    </source>
</evidence>
<evidence type="ECO:0000303" key="8">
    <source>
    </source>
</evidence>
<evidence type="ECO:0000305" key="9"/>
<evidence type="ECO:0000305" key="10">
    <source>
    </source>
</evidence>
<evidence type="ECO:0000305" key="11">
    <source>
    </source>
</evidence>
<evidence type="ECO:0000312" key="12">
    <source>
        <dbReference type="HGNC" id="HGNC:17537"/>
    </source>
</evidence>
<reference key="1">
    <citation type="journal article" date="2000" name="FEBS Lett.">
        <title>Molecular cloning, functional expression and chromosomal localization of an amiloride-sensitive Na(+) channel from human small intestine.</title>
        <authorList>
            <person name="Schaefer L."/>
            <person name="Sakai H."/>
            <person name="Mattei M.-G."/>
            <person name="Lazdunski M."/>
            <person name="Lingueglia E."/>
        </authorList>
    </citation>
    <scope>NUCLEOTIDE SEQUENCE [MRNA]</scope>
    <scope>FUNCTION</scope>
    <scope>TRANSPORTER ACTIVITY</scope>
    <scope>ACTIVITY REGULATION</scope>
    <scope>MUTAGENESIS OF ALA-443</scope>
    <scope>SUBCELLULAR LOCATION</scope>
    <scope>TISSUE SPECIFICITY</scope>
    <source>
        <tissue>Small intestine</tissue>
    </source>
</reference>
<reference key="2">
    <citation type="journal article" date="2005" name="Nature">
        <title>Generation and annotation of the DNA sequences of human chromosomes 2 and 4.</title>
        <authorList>
            <person name="Hillier L.W."/>
            <person name="Graves T.A."/>
            <person name="Fulton R.S."/>
            <person name="Fulton L.A."/>
            <person name="Pepin K.H."/>
            <person name="Minx P."/>
            <person name="Wagner-McPherson C."/>
            <person name="Layman D."/>
            <person name="Wylie K."/>
            <person name="Sekhon M."/>
            <person name="Becker M.C."/>
            <person name="Fewell G.A."/>
            <person name="Delehaunty K.D."/>
            <person name="Miner T.L."/>
            <person name="Nash W.E."/>
            <person name="Kremitzki C."/>
            <person name="Oddy L."/>
            <person name="Du H."/>
            <person name="Sun H."/>
            <person name="Bradshaw-Cordum H."/>
            <person name="Ali J."/>
            <person name="Carter J."/>
            <person name="Cordes M."/>
            <person name="Harris A."/>
            <person name="Isak A."/>
            <person name="van Brunt A."/>
            <person name="Nguyen C."/>
            <person name="Du F."/>
            <person name="Courtney L."/>
            <person name="Kalicki J."/>
            <person name="Ozersky P."/>
            <person name="Abbott S."/>
            <person name="Armstrong J."/>
            <person name="Belter E.A."/>
            <person name="Caruso L."/>
            <person name="Cedroni M."/>
            <person name="Cotton M."/>
            <person name="Davidson T."/>
            <person name="Desai A."/>
            <person name="Elliott G."/>
            <person name="Erb T."/>
            <person name="Fronick C."/>
            <person name="Gaige T."/>
            <person name="Haakenson W."/>
            <person name="Haglund K."/>
            <person name="Holmes A."/>
            <person name="Harkins R."/>
            <person name="Kim K."/>
            <person name="Kruchowski S.S."/>
            <person name="Strong C.M."/>
            <person name="Grewal N."/>
            <person name="Goyea E."/>
            <person name="Hou S."/>
            <person name="Levy A."/>
            <person name="Martinka S."/>
            <person name="Mead K."/>
            <person name="McLellan M.D."/>
            <person name="Meyer R."/>
            <person name="Randall-Maher J."/>
            <person name="Tomlinson C."/>
            <person name="Dauphin-Kohlberg S."/>
            <person name="Kozlowicz-Reilly A."/>
            <person name="Shah N."/>
            <person name="Swearengen-Shahid S."/>
            <person name="Snider J."/>
            <person name="Strong J.T."/>
            <person name="Thompson J."/>
            <person name="Yoakum M."/>
            <person name="Leonard S."/>
            <person name="Pearman C."/>
            <person name="Trani L."/>
            <person name="Radionenko M."/>
            <person name="Waligorski J.E."/>
            <person name="Wang C."/>
            <person name="Rock S.M."/>
            <person name="Tin-Wollam A.-M."/>
            <person name="Maupin R."/>
            <person name="Latreille P."/>
            <person name="Wendl M.C."/>
            <person name="Yang S.-P."/>
            <person name="Pohl C."/>
            <person name="Wallis J.W."/>
            <person name="Spieth J."/>
            <person name="Bieri T.A."/>
            <person name="Berkowicz N."/>
            <person name="Nelson J.O."/>
            <person name="Osborne J."/>
            <person name="Ding L."/>
            <person name="Meyer R."/>
            <person name="Sabo A."/>
            <person name="Shotland Y."/>
            <person name="Sinha P."/>
            <person name="Wohldmann P.E."/>
            <person name="Cook L.L."/>
            <person name="Hickenbotham M.T."/>
            <person name="Eldred J."/>
            <person name="Williams D."/>
            <person name="Jones T.A."/>
            <person name="She X."/>
            <person name="Ciccarelli F.D."/>
            <person name="Izaurralde E."/>
            <person name="Taylor J."/>
            <person name="Schmutz J."/>
            <person name="Myers R.M."/>
            <person name="Cox D.R."/>
            <person name="Huang X."/>
            <person name="McPherson J.D."/>
            <person name="Mardis E.R."/>
            <person name="Clifton S.W."/>
            <person name="Warren W.C."/>
            <person name="Chinwalla A.T."/>
            <person name="Eddy S.R."/>
            <person name="Marra M.A."/>
            <person name="Ovcharenko I."/>
            <person name="Furey T.S."/>
            <person name="Miller W."/>
            <person name="Eichler E.E."/>
            <person name="Bork P."/>
            <person name="Suyama M."/>
            <person name="Torrents D."/>
            <person name="Waterston R.H."/>
            <person name="Wilson R.K."/>
        </authorList>
    </citation>
    <scope>NUCLEOTIDE SEQUENCE [LARGE SCALE GENOMIC DNA]</scope>
</reference>
<reference key="3">
    <citation type="submission" date="2005-09" db="EMBL/GenBank/DDBJ databases">
        <authorList>
            <person name="Mural R.J."/>
            <person name="Istrail S."/>
            <person name="Sutton G.G."/>
            <person name="Florea L."/>
            <person name="Halpern A.L."/>
            <person name="Mobarry C.M."/>
            <person name="Lippert R."/>
            <person name="Walenz B."/>
            <person name="Shatkay H."/>
            <person name="Dew I."/>
            <person name="Miller J.R."/>
            <person name="Flanigan M.J."/>
            <person name="Edwards N.J."/>
            <person name="Bolanos R."/>
            <person name="Fasulo D."/>
            <person name="Halldorsson B.V."/>
            <person name="Hannenhalli S."/>
            <person name="Turner R."/>
            <person name="Yooseph S."/>
            <person name="Lu F."/>
            <person name="Nusskern D.R."/>
            <person name="Shue B.C."/>
            <person name="Zheng X.H."/>
            <person name="Zhong F."/>
            <person name="Delcher A.L."/>
            <person name="Huson D.H."/>
            <person name="Kravitz S.A."/>
            <person name="Mouchard L."/>
            <person name="Reinert K."/>
            <person name="Remington K.A."/>
            <person name="Clark A.G."/>
            <person name="Waterman M.S."/>
            <person name="Eichler E.E."/>
            <person name="Adams M.D."/>
            <person name="Hunkapiller M.W."/>
            <person name="Myers E.W."/>
            <person name="Venter J.C."/>
        </authorList>
    </citation>
    <scope>NUCLEOTIDE SEQUENCE [LARGE SCALE GENOMIC DNA]</scope>
</reference>
<reference key="4">
    <citation type="journal article" date="2012" name="FASEB J.">
        <title>BASIC--a bile acid-sensitive ion channel highly expressed in bile ducts.</title>
        <authorList>
            <person name="Wiemuth D."/>
            <person name="Sahin H."/>
            <person name="Falkenburger B.H."/>
            <person name="Lefevre C.M."/>
            <person name="Wasmuth H.E."/>
            <person name="Gruender S."/>
        </authorList>
    </citation>
    <scope>FUNCTION</scope>
    <scope>TRANSPORTER ACTIVITY</scope>
</reference>
<dbReference type="EMBL" id="AJ252011">
    <property type="protein sequence ID" value="CAB85607.1"/>
    <property type="molecule type" value="mRNA"/>
</dbReference>
<dbReference type="EMBL" id="AC093830">
    <property type="status" value="NOT_ANNOTATED_CDS"/>
    <property type="molecule type" value="Genomic_DNA"/>
</dbReference>
<dbReference type="EMBL" id="AC125334">
    <property type="status" value="NOT_ANNOTATED_CDS"/>
    <property type="molecule type" value="Genomic_DNA"/>
</dbReference>
<dbReference type="EMBL" id="CH471056">
    <property type="protein sequence ID" value="EAX04887.1"/>
    <property type="molecule type" value="Genomic_DNA"/>
</dbReference>
<dbReference type="CCDS" id="CCDS3793.1"/>
<dbReference type="RefSeq" id="NP_059115.1">
    <property type="nucleotide sequence ID" value="NM_017419.3"/>
</dbReference>
<dbReference type="SMR" id="Q9NY37"/>
<dbReference type="BioGRID" id="119729">
    <property type="interactions" value="83"/>
</dbReference>
<dbReference type="FunCoup" id="Q9NY37">
    <property type="interactions" value="30"/>
</dbReference>
<dbReference type="IntAct" id="Q9NY37">
    <property type="interactions" value="6"/>
</dbReference>
<dbReference type="STRING" id="9606.ENSP00000442477"/>
<dbReference type="TCDB" id="1.A.6.1.11">
    <property type="family name" value="the epithelial na(+) channel (enac) family"/>
</dbReference>
<dbReference type="GlyCosmos" id="Q9NY37">
    <property type="glycosylation" value="2 sites, No reported glycans"/>
</dbReference>
<dbReference type="GlyGen" id="Q9NY37">
    <property type="glycosylation" value="3 sites, 1 O-linked glycan (1 site)"/>
</dbReference>
<dbReference type="iPTMnet" id="Q9NY37"/>
<dbReference type="PhosphoSitePlus" id="Q9NY37"/>
<dbReference type="BioMuta" id="ASIC5"/>
<dbReference type="DMDM" id="74753059"/>
<dbReference type="MassIVE" id="Q9NY37"/>
<dbReference type="PaxDb" id="9606-ENSP00000442477"/>
<dbReference type="Antibodypedia" id="48122">
    <property type="antibodies" value="110 antibodies from 20 providers"/>
</dbReference>
<dbReference type="DNASU" id="51802"/>
<dbReference type="Ensembl" id="ENST00000537611.3">
    <property type="protein sequence ID" value="ENSP00000442477.2"/>
    <property type="gene ID" value="ENSG00000256394.3"/>
</dbReference>
<dbReference type="GeneID" id="51802"/>
<dbReference type="KEGG" id="hsa:51802"/>
<dbReference type="MANE-Select" id="ENST00000537611.3">
    <property type="protein sequence ID" value="ENSP00000442477.2"/>
    <property type="RefSeq nucleotide sequence ID" value="NM_017419.3"/>
    <property type="RefSeq protein sequence ID" value="NP_059115.1"/>
</dbReference>
<dbReference type="UCSC" id="uc003ipe.1">
    <property type="organism name" value="human"/>
</dbReference>
<dbReference type="AGR" id="HGNC:17537"/>
<dbReference type="CTD" id="51802"/>
<dbReference type="DisGeNET" id="51802"/>
<dbReference type="GeneCards" id="ASIC5"/>
<dbReference type="HGNC" id="HGNC:17537">
    <property type="gene designation" value="ASIC5"/>
</dbReference>
<dbReference type="HPA" id="ENSG00000256394">
    <property type="expression patterns" value="Tissue enriched (intestine)"/>
</dbReference>
<dbReference type="MalaCards" id="ASIC5"/>
<dbReference type="MIM" id="616693">
    <property type="type" value="gene"/>
</dbReference>
<dbReference type="neXtProt" id="NX_Q9NY37"/>
<dbReference type="PharmGKB" id="PA134946702"/>
<dbReference type="VEuPathDB" id="HostDB:ENSG00000256394"/>
<dbReference type="eggNOG" id="KOG4294">
    <property type="taxonomic scope" value="Eukaryota"/>
</dbReference>
<dbReference type="GeneTree" id="ENSGT00940000160549"/>
<dbReference type="HOGENOM" id="CLU_020415_4_0_1"/>
<dbReference type="InParanoid" id="Q9NY37"/>
<dbReference type="OMA" id="HQNFSIA"/>
<dbReference type="OrthoDB" id="6021021at2759"/>
<dbReference type="PAN-GO" id="Q9NY37">
    <property type="GO annotations" value="3 GO annotations based on evolutionary models"/>
</dbReference>
<dbReference type="PhylomeDB" id="Q9NY37"/>
<dbReference type="TreeFam" id="TF330663"/>
<dbReference type="PathwayCommons" id="Q9NY37"/>
<dbReference type="Reactome" id="R-HSA-2672351">
    <property type="pathway name" value="Stimuli-sensing channels"/>
</dbReference>
<dbReference type="BioGRID-ORCS" id="51802">
    <property type="hits" value="9 hits in 1142 CRISPR screens"/>
</dbReference>
<dbReference type="GenomeRNAi" id="51802"/>
<dbReference type="Pharos" id="Q9NY37">
    <property type="development level" value="Tbio"/>
</dbReference>
<dbReference type="PRO" id="PR:Q9NY37"/>
<dbReference type="Proteomes" id="UP000005640">
    <property type="component" value="Chromosome 4"/>
</dbReference>
<dbReference type="RNAct" id="Q9NY37">
    <property type="molecule type" value="protein"/>
</dbReference>
<dbReference type="Bgee" id="ENSG00000256394">
    <property type="expression patterns" value="Expressed in duodenum and 16 other cell types or tissues"/>
</dbReference>
<dbReference type="GO" id="GO:0016324">
    <property type="term" value="C:apical plasma membrane"/>
    <property type="evidence" value="ECO:0000250"/>
    <property type="project" value="UniProtKB"/>
</dbReference>
<dbReference type="GO" id="GO:0005886">
    <property type="term" value="C:plasma membrane"/>
    <property type="evidence" value="ECO:0000314"/>
    <property type="project" value="UniProtKB"/>
</dbReference>
<dbReference type="GO" id="GO:0160228">
    <property type="term" value="F:bile acid-gated sodium channel activity"/>
    <property type="evidence" value="ECO:0000314"/>
    <property type="project" value="UniProtKB"/>
</dbReference>
<dbReference type="GO" id="GO:0015280">
    <property type="term" value="F:ligand-gated sodium channel activity"/>
    <property type="evidence" value="ECO:0000318"/>
    <property type="project" value="GO_Central"/>
</dbReference>
<dbReference type="GO" id="GO:0015252">
    <property type="term" value="F:proton channel activity"/>
    <property type="evidence" value="ECO:0007669"/>
    <property type="project" value="Ensembl"/>
</dbReference>
<dbReference type="GO" id="GO:0019228">
    <property type="term" value="P:neuronal action potential"/>
    <property type="evidence" value="ECO:0000250"/>
    <property type="project" value="UniProtKB"/>
</dbReference>
<dbReference type="GO" id="GO:0098719">
    <property type="term" value="P:sodium ion import across plasma membrane"/>
    <property type="evidence" value="ECO:0000250"/>
    <property type="project" value="UniProtKB"/>
</dbReference>
<dbReference type="GO" id="GO:0035725">
    <property type="term" value="P:sodium ion transmembrane transport"/>
    <property type="evidence" value="ECO:0000318"/>
    <property type="project" value="GO_Central"/>
</dbReference>
<dbReference type="FunFam" id="2.60.470.10:FF:000006">
    <property type="entry name" value="Acid-sensing ion channel 5"/>
    <property type="match status" value="1"/>
</dbReference>
<dbReference type="FunFam" id="1.10.287.770:FF:000001">
    <property type="entry name" value="Acid-sensing ion channel subunit 1"/>
    <property type="match status" value="1"/>
</dbReference>
<dbReference type="Gene3D" id="2.60.470.10">
    <property type="entry name" value="Acid-sensing ion channels like domains"/>
    <property type="match status" value="1"/>
</dbReference>
<dbReference type="Gene3D" id="1.10.287.770">
    <property type="entry name" value="YojJ-like"/>
    <property type="match status" value="1"/>
</dbReference>
<dbReference type="InterPro" id="IPR001873">
    <property type="entry name" value="ENaC"/>
</dbReference>
<dbReference type="PANTHER" id="PTHR11690:SF286">
    <property type="entry name" value="ACID-SENSING ION CHANNEL 5"/>
    <property type="match status" value="1"/>
</dbReference>
<dbReference type="PANTHER" id="PTHR11690">
    <property type="entry name" value="AMILORIDE-SENSITIVE SODIUM CHANNEL-RELATED"/>
    <property type="match status" value="1"/>
</dbReference>
<dbReference type="Pfam" id="PF00858">
    <property type="entry name" value="ASC"/>
    <property type="match status" value="1"/>
</dbReference>
<dbReference type="PRINTS" id="PR01078">
    <property type="entry name" value="AMINACHANNEL"/>
</dbReference>
<comment type="function">
    <text evidence="2 3 5 6 11">Forms bile acid-gated sodium channels and may play a role in bile acid-dependent absorption and secretion by epithelial cells of the bile ducts (PubMed:10767424, PubMed:22735174). Displays high selectivity for sodium ions but can also permit the permeation of other cations (Probable). The gating could be indirect and the consequence of alterations of the membrane environment of the channel by bile acids (By similarity). As a sodium channel of type II unipolar brush cells of the vestibulocerebellum, controlling the electrical activity of these cells, could play a role in motor coordination and balance (By similarity).</text>
</comment>
<comment type="catalytic activity">
    <reaction evidence="5 6">
        <text>Na(+)(in) = Na(+)(out)</text>
        <dbReference type="Rhea" id="RHEA:34963"/>
        <dbReference type="ChEBI" id="CHEBI:29101"/>
    </reaction>
</comment>
<comment type="catalytic activity">
    <reaction evidence="2">
        <text>Li(+)(in) = Li(+)(out)</text>
        <dbReference type="Rhea" id="RHEA:78551"/>
        <dbReference type="ChEBI" id="CHEBI:49713"/>
    </reaction>
</comment>
<comment type="catalytic activity">
    <reaction evidence="2">
        <text>K(+)(in) = K(+)(out)</text>
        <dbReference type="Rhea" id="RHEA:29463"/>
        <dbReference type="ChEBI" id="CHEBI:29103"/>
    </reaction>
</comment>
<comment type="catalytic activity">
    <reaction evidence="2">
        <text>H(+)(in) = H(+)(out)</text>
        <dbReference type="Rhea" id="RHEA:34979"/>
        <dbReference type="ChEBI" id="CHEBI:15378"/>
    </reaction>
</comment>
<comment type="activity regulation">
    <text evidence="10">Inhibited by the diuretic drug amiloride.</text>
</comment>
<comment type="subunit">
    <text evidence="1">Forms homotrimeric channels.</text>
</comment>
<comment type="subcellular location">
    <subcellularLocation>
        <location evidence="2">Apical cell membrane</location>
        <topology evidence="4">Multi-pass membrane protein</topology>
    </subcellularLocation>
    <subcellularLocation>
        <location evidence="5">Cell membrane</location>
        <topology evidence="4">Multi-pass membrane protein</topology>
    </subcellularLocation>
</comment>
<comment type="tissue specificity">
    <text evidence="5">Detected in small intestine, duodenum and jejunum. Detected at very low levels in testis and rectum.</text>
</comment>
<comment type="similarity">
    <text evidence="9">Belongs to the amiloride-sensitive sodium channel (TC 1.A.6) family. ASIC5 subfamily.</text>
</comment>